<name>ATPF_NITV4</name>
<sequence>MKGLKITAAAGAMTLFFASMAYASGDSGHGPDWGNFAFRVVNFVIFAGIIWKAAGKKIVGFFTGRRQGIEQELNDLETRKTEAKKQLAEVERRIANLESERQAILADYRAQGENIKAAIIDKAEKSASLITEQAKRTADNEIKAAIDAMRAQMADEIIVAAEKLLAEKLTANEHEKLIDKYLTKVVLN</sequence>
<gene>
    <name evidence="1" type="primary">atpF</name>
    <name type="ordered locus">Dvul_2191</name>
</gene>
<keyword id="KW-0066">ATP synthesis</keyword>
<keyword id="KW-0997">Cell inner membrane</keyword>
<keyword id="KW-1003">Cell membrane</keyword>
<keyword id="KW-0138">CF(0)</keyword>
<keyword id="KW-0375">Hydrogen ion transport</keyword>
<keyword id="KW-0406">Ion transport</keyword>
<keyword id="KW-0472">Membrane</keyword>
<keyword id="KW-0812">Transmembrane</keyword>
<keyword id="KW-1133">Transmembrane helix</keyword>
<keyword id="KW-0813">Transport</keyword>
<evidence type="ECO:0000255" key="1">
    <source>
        <dbReference type="HAMAP-Rule" id="MF_01398"/>
    </source>
</evidence>
<feature type="chain" id="PRO_5000210501" description="ATP synthase subunit b">
    <location>
        <begin position="1"/>
        <end position="188"/>
    </location>
</feature>
<feature type="transmembrane region" description="Helical" evidence="1">
    <location>
        <begin position="7"/>
        <end position="26"/>
    </location>
</feature>
<comment type="function">
    <text evidence="1">F(1)F(0) ATP synthase produces ATP from ADP in the presence of a proton or sodium gradient. F-type ATPases consist of two structural domains, F(1) containing the extramembraneous catalytic core and F(0) containing the membrane proton channel, linked together by a central stalk and a peripheral stalk. During catalysis, ATP synthesis in the catalytic domain of F(1) is coupled via a rotary mechanism of the central stalk subunits to proton translocation.</text>
</comment>
<comment type="function">
    <text evidence="1">Component of the F(0) channel, it forms part of the peripheral stalk, linking F(1) to F(0).</text>
</comment>
<comment type="subunit">
    <text evidence="1">F-type ATPases have 2 components, F(1) - the catalytic core - and F(0) - the membrane proton channel. F(1) has five subunits: alpha(3), beta(3), gamma(1), delta(1), epsilon(1). F(0) has three main subunits: a(1), b(2) and c(10-14). The alpha and beta chains form an alternating ring which encloses part of the gamma chain. F(1) is attached to F(0) by a central stalk formed by the gamma and epsilon chains, while a peripheral stalk is formed by the delta and b chains.</text>
</comment>
<comment type="subcellular location">
    <subcellularLocation>
        <location evidence="1">Cell inner membrane</location>
        <topology evidence="1">Single-pass membrane protein</topology>
    </subcellularLocation>
</comment>
<comment type="similarity">
    <text evidence="1">Belongs to the ATPase B chain family.</text>
</comment>
<dbReference type="EMBL" id="CP000527">
    <property type="protein sequence ID" value="ABM29207.1"/>
    <property type="molecule type" value="Genomic_DNA"/>
</dbReference>
<dbReference type="RefSeq" id="WP_011792710.1">
    <property type="nucleotide sequence ID" value="NC_008751.1"/>
</dbReference>
<dbReference type="SMR" id="A1VFJ1"/>
<dbReference type="KEGG" id="dvl:Dvul_2191"/>
<dbReference type="HOGENOM" id="CLU_079215_3_1_7"/>
<dbReference type="Proteomes" id="UP000009173">
    <property type="component" value="Chromosome"/>
</dbReference>
<dbReference type="GO" id="GO:0005886">
    <property type="term" value="C:plasma membrane"/>
    <property type="evidence" value="ECO:0007669"/>
    <property type="project" value="UniProtKB-SubCell"/>
</dbReference>
<dbReference type="GO" id="GO:0045259">
    <property type="term" value="C:proton-transporting ATP synthase complex"/>
    <property type="evidence" value="ECO:0007669"/>
    <property type="project" value="UniProtKB-KW"/>
</dbReference>
<dbReference type="GO" id="GO:0046933">
    <property type="term" value="F:proton-transporting ATP synthase activity, rotational mechanism"/>
    <property type="evidence" value="ECO:0007669"/>
    <property type="project" value="UniProtKB-UniRule"/>
</dbReference>
<dbReference type="GO" id="GO:0046961">
    <property type="term" value="F:proton-transporting ATPase activity, rotational mechanism"/>
    <property type="evidence" value="ECO:0007669"/>
    <property type="project" value="TreeGrafter"/>
</dbReference>
<dbReference type="CDD" id="cd06503">
    <property type="entry name" value="ATP-synt_Fo_b"/>
    <property type="match status" value="1"/>
</dbReference>
<dbReference type="HAMAP" id="MF_01398">
    <property type="entry name" value="ATP_synth_b_bprime"/>
    <property type="match status" value="1"/>
</dbReference>
<dbReference type="InterPro" id="IPR002146">
    <property type="entry name" value="ATP_synth_b/b'su_bac/chlpt"/>
</dbReference>
<dbReference type="InterPro" id="IPR050059">
    <property type="entry name" value="ATP_synthase_B_chain"/>
</dbReference>
<dbReference type="PANTHER" id="PTHR33445:SF1">
    <property type="entry name" value="ATP SYNTHASE SUBUNIT B"/>
    <property type="match status" value="1"/>
</dbReference>
<dbReference type="PANTHER" id="PTHR33445">
    <property type="entry name" value="ATP SYNTHASE SUBUNIT B', CHLOROPLASTIC"/>
    <property type="match status" value="1"/>
</dbReference>
<dbReference type="Pfam" id="PF00430">
    <property type="entry name" value="ATP-synt_B"/>
    <property type="match status" value="1"/>
</dbReference>
<accession>A1VFJ1</accession>
<reference key="1">
    <citation type="journal article" date="2009" name="Environ. Microbiol.">
        <title>Contribution of mobile genetic elements to Desulfovibrio vulgaris genome plasticity.</title>
        <authorList>
            <person name="Walker C.B."/>
            <person name="Stolyar S."/>
            <person name="Chivian D."/>
            <person name="Pinel N."/>
            <person name="Gabster J.A."/>
            <person name="Dehal P.S."/>
            <person name="He Z."/>
            <person name="Yang Z.K."/>
            <person name="Yen H.C."/>
            <person name="Zhou J."/>
            <person name="Wall J.D."/>
            <person name="Hazen T.C."/>
            <person name="Arkin A.P."/>
            <person name="Stahl D.A."/>
        </authorList>
    </citation>
    <scope>NUCLEOTIDE SEQUENCE [LARGE SCALE GENOMIC DNA]</scope>
    <source>
        <strain>DP4</strain>
    </source>
</reference>
<protein>
    <recommendedName>
        <fullName evidence="1">ATP synthase subunit b</fullName>
    </recommendedName>
    <alternativeName>
        <fullName evidence="1">ATP synthase F(0) sector subunit b</fullName>
    </alternativeName>
    <alternativeName>
        <fullName evidence="1">ATPase subunit I</fullName>
    </alternativeName>
    <alternativeName>
        <fullName evidence="1">F-type ATPase subunit b</fullName>
        <shortName evidence="1">F-ATPase subunit b</shortName>
    </alternativeName>
</protein>
<proteinExistence type="inferred from homology"/>
<organism>
    <name type="scientific">Nitratidesulfovibrio vulgaris (strain DP4)</name>
    <name type="common">Desulfovibrio vulgaris</name>
    <dbReference type="NCBI Taxonomy" id="391774"/>
    <lineage>
        <taxon>Bacteria</taxon>
        <taxon>Pseudomonadati</taxon>
        <taxon>Thermodesulfobacteriota</taxon>
        <taxon>Desulfovibrionia</taxon>
        <taxon>Desulfovibrionales</taxon>
        <taxon>Desulfovibrionaceae</taxon>
        <taxon>Nitratidesulfovibrio</taxon>
    </lineage>
</organism>